<reference key="1">
    <citation type="journal article" date="2006" name="Mol. Reprod. Dev.">
        <title>The human Na,K-ATPase alpha 4 isoform is a ouabain-sensitive alpha isoform that is expressed in sperm.</title>
        <authorList>
            <person name="Hlivko J.T."/>
            <person name="Chakraborty S."/>
            <person name="Hlivko T.J."/>
            <person name="Sengupta A."/>
            <person name="James P.F."/>
        </authorList>
    </citation>
    <scope>NUCLEOTIDE SEQUENCE [MRNA]</scope>
    <scope>SUBCELLULAR LOCATION</scope>
    <scope>ACTIVITY REGULATION</scope>
    <source>
        <tissue>Testis</tissue>
    </source>
</reference>
<reference key="2">
    <citation type="journal article" date="2006" name="Nature">
        <title>The DNA sequence and biological annotation of human chromosome 1.</title>
        <authorList>
            <person name="Gregory S.G."/>
            <person name="Barlow K.F."/>
            <person name="McLay K.E."/>
            <person name="Kaul R."/>
            <person name="Swarbreck D."/>
            <person name="Dunham A."/>
            <person name="Scott C.E."/>
            <person name="Howe K.L."/>
            <person name="Woodfine K."/>
            <person name="Spencer C.C.A."/>
            <person name="Jones M.C."/>
            <person name="Gillson C."/>
            <person name="Searle S."/>
            <person name="Zhou Y."/>
            <person name="Kokocinski F."/>
            <person name="McDonald L."/>
            <person name="Evans R."/>
            <person name="Phillips K."/>
            <person name="Atkinson A."/>
            <person name="Cooper R."/>
            <person name="Jones C."/>
            <person name="Hall R.E."/>
            <person name="Andrews T.D."/>
            <person name="Lloyd C."/>
            <person name="Ainscough R."/>
            <person name="Almeida J.P."/>
            <person name="Ambrose K.D."/>
            <person name="Anderson F."/>
            <person name="Andrew R.W."/>
            <person name="Ashwell R.I.S."/>
            <person name="Aubin K."/>
            <person name="Babbage A.K."/>
            <person name="Bagguley C.L."/>
            <person name="Bailey J."/>
            <person name="Beasley H."/>
            <person name="Bethel G."/>
            <person name="Bird C.P."/>
            <person name="Bray-Allen S."/>
            <person name="Brown J.Y."/>
            <person name="Brown A.J."/>
            <person name="Buckley D."/>
            <person name="Burton J."/>
            <person name="Bye J."/>
            <person name="Carder C."/>
            <person name="Chapman J.C."/>
            <person name="Clark S.Y."/>
            <person name="Clarke G."/>
            <person name="Clee C."/>
            <person name="Cobley V."/>
            <person name="Collier R.E."/>
            <person name="Corby N."/>
            <person name="Coville G.J."/>
            <person name="Davies J."/>
            <person name="Deadman R."/>
            <person name="Dunn M."/>
            <person name="Earthrowl M."/>
            <person name="Ellington A.G."/>
            <person name="Errington H."/>
            <person name="Frankish A."/>
            <person name="Frankland J."/>
            <person name="French L."/>
            <person name="Garner P."/>
            <person name="Garnett J."/>
            <person name="Gay L."/>
            <person name="Ghori M.R.J."/>
            <person name="Gibson R."/>
            <person name="Gilby L.M."/>
            <person name="Gillett W."/>
            <person name="Glithero R.J."/>
            <person name="Grafham D.V."/>
            <person name="Griffiths C."/>
            <person name="Griffiths-Jones S."/>
            <person name="Grocock R."/>
            <person name="Hammond S."/>
            <person name="Harrison E.S.I."/>
            <person name="Hart E."/>
            <person name="Haugen E."/>
            <person name="Heath P.D."/>
            <person name="Holmes S."/>
            <person name="Holt K."/>
            <person name="Howden P.J."/>
            <person name="Hunt A.R."/>
            <person name="Hunt S.E."/>
            <person name="Hunter G."/>
            <person name="Isherwood J."/>
            <person name="James R."/>
            <person name="Johnson C."/>
            <person name="Johnson D."/>
            <person name="Joy A."/>
            <person name="Kay M."/>
            <person name="Kershaw J.K."/>
            <person name="Kibukawa M."/>
            <person name="Kimberley A.M."/>
            <person name="King A."/>
            <person name="Knights A.J."/>
            <person name="Lad H."/>
            <person name="Laird G."/>
            <person name="Lawlor S."/>
            <person name="Leongamornlert D.A."/>
            <person name="Lloyd D.M."/>
            <person name="Loveland J."/>
            <person name="Lovell J."/>
            <person name="Lush M.J."/>
            <person name="Lyne R."/>
            <person name="Martin S."/>
            <person name="Mashreghi-Mohammadi M."/>
            <person name="Matthews L."/>
            <person name="Matthews N.S.W."/>
            <person name="McLaren S."/>
            <person name="Milne S."/>
            <person name="Mistry S."/>
            <person name="Moore M.J.F."/>
            <person name="Nickerson T."/>
            <person name="O'Dell C.N."/>
            <person name="Oliver K."/>
            <person name="Palmeiri A."/>
            <person name="Palmer S.A."/>
            <person name="Parker A."/>
            <person name="Patel D."/>
            <person name="Pearce A.V."/>
            <person name="Peck A.I."/>
            <person name="Pelan S."/>
            <person name="Phelps K."/>
            <person name="Phillimore B.J."/>
            <person name="Plumb R."/>
            <person name="Rajan J."/>
            <person name="Raymond C."/>
            <person name="Rouse G."/>
            <person name="Saenphimmachak C."/>
            <person name="Sehra H.K."/>
            <person name="Sheridan E."/>
            <person name="Shownkeen R."/>
            <person name="Sims S."/>
            <person name="Skuce C.D."/>
            <person name="Smith M."/>
            <person name="Steward C."/>
            <person name="Subramanian S."/>
            <person name="Sycamore N."/>
            <person name="Tracey A."/>
            <person name="Tromans A."/>
            <person name="Van Helmond Z."/>
            <person name="Wall M."/>
            <person name="Wallis J.M."/>
            <person name="White S."/>
            <person name="Whitehead S.L."/>
            <person name="Wilkinson J.E."/>
            <person name="Willey D.L."/>
            <person name="Williams H."/>
            <person name="Wilming L."/>
            <person name="Wray P.W."/>
            <person name="Wu Z."/>
            <person name="Coulson A."/>
            <person name="Vaudin M."/>
            <person name="Sulston J.E."/>
            <person name="Durbin R.M."/>
            <person name="Hubbard T."/>
            <person name="Wooster R."/>
            <person name="Dunham I."/>
            <person name="Carter N.P."/>
            <person name="McVean G."/>
            <person name="Ross M.T."/>
            <person name="Harrow J."/>
            <person name="Olson M.V."/>
            <person name="Beck S."/>
            <person name="Rogers J."/>
            <person name="Bentley D.R."/>
        </authorList>
    </citation>
    <scope>NUCLEOTIDE SEQUENCE [LARGE SCALE GENOMIC DNA]</scope>
</reference>
<reference key="3">
    <citation type="journal article" date="2004" name="Genome Res.">
        <title>The status, quality, and expansion of the NIH full-length cDNA project: the Mammalian Gene Collection (MGC).</title>
        <authorList>
            <consortium name="The MGC Project Team"/>
        </authorList>
    </citation>
    <scope>NUCLEOTIDE SEQUENCE [LARGE SCALE MRNA] (ISOFORMS 1 AND 2)</scope>
    <source>
        <tissue>Testis</tissue>
        <tissue>Urinary bladder</tissue>
    </source>
</reference>
<reference key="4">
    <citation type="journal article" date="2002" name="Gene">
        <title>Physical mapping and characterization of the human Na,K-ATPase isoform, ATP1A4.</title>
        <authorList>
            <person name="Keryanov S."/>
            <person name="Gardner K.L."/>
        </authorList>
    </citation>
    <scope>NUCLEOTIDE SEQUENCE [GENOMIC DNA] OF 1-69 AND 138-1029 (ISOFORM 1)</scope>
</reference>
<reference key="5">
    <citation type="journal article" date="1994" name="Proc. Natl. Acad. Sci. U.S.A.">
        <title>A putative fourth Na+,K(+)-ATPase alpha-subunit gene is expressed in testis.</title>
        <authorList>
            <person name="Shamraj O.I."/>
            <person name="Lingrel J.B."/>
        </authorList>
    </citation>
    <scope>NUCLEOTIDE SEQUENCE [GENOMIC DNA] OF 50-220 (ISOFORM 1)</scope>
    <scope>VARIANT ASP-83</scope>
    <source>
        <tissue>Testis</tissue>
    </source>
</reference>
<reference key="6">
    <citation type="journal article" date="2004" name="Nat. Genet.">
        <title>Complete sequencing and characterization of 21,243 full-length human cDNAs.</title>
        <authorList>
            <person name="Ota T."/>
            <person name="Suzuki Y."/>
            <person name="Nishikawa T."/>
            <person name="Otsuki T."/>
            <person name="Sugiyama T."/>
            <person name="Irie R."/>
            <person name="Wakamatsu A."/>
            <person name="Hayashi K."/>
            <person name="Sato H."/>
            <person name="Nagai K."/>
            <person name="Kimura K."/>
            <person name="Makita H."/>
            <person name="Sekine M."/>
            <person name="Obayashi M."/>
            <person name="Nishi T."/>
            <person name="Shibahara T."/>
            <person name="Tanaka T."/>
            <person name="Ishii S."/>
            <person name="Yamamoto J."/>
            <person name="Saito K."/>
            <person name="Kawai Y."/>
            <person name="Isono Y."/>
            <person name="Nakamura Y."/>
            <person name="Nagahari K."/>
            <person name="Murakami K."/>
            <person name="Yasuda T."/>
            <person name="Iwayanagi T."/>
            <person name="Wagatsuma M."/>
            <person name="Shiratori A."/>
            <person name="Sudo H."/>
            <person name="Hosoiri T."/>
            <person name="Kaku Y."/>
            <person name="Kodaira H."/>
            <person name="Kondo H."/>
            <person name="Sugawara M."/>
            <person name="Takahashi M."/>
            <person name="Kanda K."/>
            <person name="Yokoi T."/>
            <person name="Furuya T."/>
            <person name="Kikkawa E."/>
            <person name="Omura Y."/>
            <person name="Abe K."/>
            <person name="Kamihara K."/>
            <person name="Katsuta N."/>
            <person name="Sato K."/>
            <person name="Tanikawa M."/>
            <person name="Yamazaki M."/>
            <person name="Ninomiya K."/>
            <person name="Ishibashi T."/>
            <person name="Yamashita H."/>
            <person name="Murakawa K."/>
            <person name="Fujimori K."/>
            <person name="Tanai H."/>
            <person name="Kimata M."/>
            <person name="Watanabe M."/>
            <person name="Hiraoka S."/>
            <person name="Chiba Y."/>
            <person name="Ishida S."/>
            <person name="Ono Y."/>
            <person name="Takiguchi S."/>
            <person name="Watanabe S."/>
            <person name="Yosida M."/>
            <person name="Hotuta T."/>
            <person name="Kusano J."/>
            <person name="Kanehori K."/>
            <person name="Takahashi-Fujii A."/>
            <person name="Hara H."/>
            <person name="Tanase T.-O."/>
            <person name="Nomura Y."/>
            <person name="Togiya S."/>
            <person name="Komai F."/>
            <person name="Hara R."/>
            <person name="Takeuchi K."/>
            <person name="Arita M."/>
            <person name="Imose N."/>
            <person name="Musashino K."/>
            <person name="Yuuki H."/>
            <person name="Oshima A."/>
            <person name="Sasaki N."/>
            <person name="Aotsuka S."/>
            <person name="Yoshikawa Y."/>
            <person name="Matsunawa H."/>
            <person name="Ichihara T."/>
            <person name="Shiohata N."/>
            <person name="Sano S."/>
            <person name="Moriya S."/>
            <person name="Momiyama H."/>
            <person name="Satoh N."/>
            <person name="Takami S."/>
            <person name="Terashima Y."/>
            <person name="Suzuki O."/>
            <person name="Nakagawa S."/>
            <person name="Senoh A."/>
            <person name="Mizoguchi H."/>
            <person name="Goto Y."/>
            <person name="Shimizu F."/>
            <person name="Wakebe H."/>
            <person name="Hishigaki H."/>
            <person name="Watanabe T."/>
            <person name="Sugiyama A."/>
            <person name="Takemoto M."/>
            <person name="Kawakami B."/>
            <person name="Yamazaki M."/>
            <person name="Watanabe K."/>
            <person name="Kumagai A."/>
            <person name="Itakura S."/>
            <person name="Fukuzumi Y."/>
            <person name="Fujimori Y."/>
            <person name="Komiyama M."/>
            <person name="Tashiro H."/>
            <person name="Tanigami A."/>
            <person name="Fujiwara T."/>
            <person name="Ono T."/>
            <person name="Yamada K."/>
            <person name="Fujii Y."/>
            <person name="Ozaki K."/>
            <person name="Hirao M."/>
            <person name="Ohmori Y."/>
            <person name="Kawabata A."/>
            <person name="Hikiji T."/>
            <person name="Kobatake N."/>
            <person name="Inagaki H."/>
            <person name="Ikema Y."/>
            <person name="Okamoto S."/>
            <person name="Okitani R."/>
            <person name="Kawakami T."/>
            <person name="Noguchi S."/>
            <person name="Itoh T."/>
            <person name="Shigeta K."/>
            <person name="Senba T."/>
            <person name="Matsumura K."/>
            <person name="Nakajima Y."/>
            <person name="Mizuno T."/>
            <person name="Morinaga M."/>
            <person name="Sasaki M."/>
            <person name="Togashi T."/>
            <person name="Oyama M."/>
            <person name="Hata H."/>
            <person name="Watanabe M."/>
            <person name="Komatsu T."/>
            <person name="Mizushima-Sugano J."/>
            <person name="Satoh T."/>
            <person name="Shirai Y."/>
            <person name="Takahashi Y."/>
            <person name="Nakagawa K."/>
            <person name="Okumura K."/>
            <person name="Nagase T."/>
            <person name="Nomura N."/>
            <person name="Kikuchi H."/>
            <person name="Masuho Y."/>
            <person name="Yamashita R."/>
            <person name="Nakai K."/>
            <person name="Yada T."/>
            <person name="Nakamura Y."/>
            <person name="Ohara O."/>
            <person name="Isogai T."/>
            <person name="Sugano S."/>
        </authorList>
    </citation>
    <scope>NUCLEOTIDE SEQUENCE [LARGE SCALE MRNA] OF 549-1017 (ISOFORM 1)</scope>
    <source>
        <tissue>Trachea</tissue>
    </source>
</reference>
<gene>
    <name evidence="9" type="primary">ATP1A4</name>
    <name type="synonym">ATP1AL2</name>
</gene>
<dbReference type="EC" id="7.2.2.13" evidence="2"/>
<dbReference type="EMBL" id="AF506797">
    <property type="protein sequence ID" value="AAQ07964.1"/>
    <property type="status" value="ALT_INIT"/>
    <property type="molecule type" value="mRNA"/>
</dbReference>
<dbReference type="EMBL" id="AL121987">
    <property type="status" value="NOT_ANNOTATED_CDS"/>
    <property type="molecule type" value="Genomic_DNA"/>
</dbReference>
<dbReference type="EMBL" id="AF421887">
    <property type="protein sequence ID" value="AAL35818.1"/>
    <property type="molecule type" value="Genomic_DNA"/>
</dbReference>
<dbReference type="EMBL" id="AF310646">
    <property type="protein sequence ID" value="AAK72396.2"/>
    <property type="molecule type" value="Genomic_DNA"/>
</dbReference>
<dbReference type="EMBL" id="AF430843">
    <property type="protein sequence ID" value="AAK72396.2"/>
    <property type="status" value="JOINED"/>
    <property type="molecule type" value="Genomic_DNA"/>
</dbReference>
<dbReference type="EMBL" id="AF390027">
    <property type="protein sequence ID" value="AAK72396.2"/>
    <property type="status" value="JOINED"/>
    <property type="molecule type" value="Genomic_DNA"/>
</dbReference>
<dbReference type="EMBL" id="AY039031">
    <property type="protein sequence ID" value="AAK72396.2"/>
    <property type="status" value="JOINED"/>
    <property type="molecule type" value="Genomic_DNA"/>
</dbReference>
<dbReference type="EMBL" id="AF459737">
    <property type="protein sequence ID" value="AAL66357.1"/>
    <property type="molecule type" value="mRNA"/>
</dbReference>
<dbReference type="EMBL" id="AF352828">
    <property type="protein sequence ID" value="AAM20793.1"/>
    <property type="molecule type" value="Genomic_DNA"/>
</dbReference>
<dbReference type="EMBL" id="AH002997">
    <property type="protein sequence ID" value="AAA60941.1"/>
    <property type="molecule type" value="Genomic_DNA"/>
</dbReference>
<dbReference type="EMBL" id="AK098076">
    <property type="protein sequence ID" value="BAC05228.1"/>
    <property type="status" value="ALT_INIT"/>
    <property type="molecule type" value="mRNA"/>
</dbReference>
<dbReference type="EMBL" id="BC028297">
    <property type="protein sequence ID" value="AAH28297.1"/>
    <property type="molecule type" value="mRNA"/>
</dbReference>
<dbReference type="EMBL" id="BC094801">
    <property type="protein sequence ID" value="AAH94801.1"/>
    <property type="molecule type" value="mRNA"/>
</dbReference>
<dbReference type="CCDS" id="CCDS1197.1">
    <molecule id="Q13733-1"/>
</dbReference>
<dbReference type="CCDS" id="CCDS44255.1">
    <molecule id="Q13733-2"/>
</dbReference>
<dbReference type="RefSeq" id="NP_001001734.1">
    <molecule id="Q13733-2"/>
    <property type="nucleotide sequence ID" value="NM_001001734.2"/>
</dbReference>
<dbReference type="RefSeq" id="NP_653300.2">
    <molecule id="Q13733-1"/>
    <property type="nucleotide sequence ID" value="NM_144699.4"/>
</dbReference>
<dbReference type="PDB" id="8ZYJ">
    <property type="method" value="EM"/>
    <property type="resolution" value="2.37 A"/>
    <property type="chains" value="A=47-1029"/>
</dbReference>
<dbReference type="PDBsum" id="8ZYJ"/>
<dbReference type="EMDB" id="EMD-60570"/>
<dbReference type="SMR" id="Q13733"/>
<dbReference type="BioGRID" id="106970">
    <property type="interactions" value="37"/>
</dbReference>
<dbReference type="CORUM" id="Q13733"/>
<dbReference type="FunCoup" id="Q13733">
    <property type="interactions" value="727"/>
</dbReference>
<dbReference type="IntAct" id="Q13733">
    <property type="interactions" value="17"/>
</dbReference>
<dbReference type="MINT" id="Q13733"/>
<dbReference type="STRING" id="9606.ENSP00000357060"/>
<dbReference type="ChEMBL" id="CHEMBL2095186"/>
<dbReference type="DrugBank" id="DB09020">
    <property type="generic name" value="Bisacodyl"/>
</dbReference>
<dbReference type="DrugBank" id="DB01250">
    <property type="generic name" value="Olsalazine"/>
</dbReference>
<dbReference type="DrugBank" id="DB09479">
    <property type="generic name" value="Rubidium Rb-82"/>
</dbReference>
<dbReference type="DrugBank" id="DB16690">
    <property type="generic name" value="Tegoprazan"/>
</dbReference>
<dbReference type="DrugCentral" id="Q13733"/>
<dbReference type="GlyGen" id="Q13733">
    <property type="glycosylation" value="1 site"/>
</dbReference>
<dbReference type="iPTMnet" id="Q13733"/>
<dbReference type="MetOSite" id="Q13733"/>
<dbReference type="PhosphoSitePlus" id="Q13733"/>
<dbReference type="SwissPalm" id="Q13733"/>
<dbReference type="BioMuta" id="ATP1A4"/>
<dbReference type="DMDM" id="23830899"/>
<dbReference type="jPOST" id="Q13733"/>
<dbReference type="MassIVE" id="Q13733"/>
<dbReference type="PaxDb" id="9606-ENSP00000357060"/>
<dbReference type="PeptideAtlas" id="Q13733"/>
<dbReference type="ProteomicsDB" id="59668">
    <molecule id="Q13733-1"/>
</dbReference>
<dbReference type="ProteomicsDB" id="59669">
    <molecule id="Q13733-2"/>
</dbReference>
<dbReference type="Antibodypedia" id="55096">
    <property type="antibodies" value="13 antibodies from 5 providers"/>
</dbReference>
<dbReference type="DNASU" id="480"/>
<dbReference type="Ensembl" id="ENST00000368081.9">
    <molecule id="Q13733-1"/>
    <property type="protein sequence ID" value="ENSP00000357060.4"/>
    <property type="gene ID" value="ENSG00000132681.17"/>
</dbReference>
<dbReference type="Ensembl" id="ENST00000470705.1">
    <molecule id="Q13733-2"/>
    <property type="protein sequence ID" value="ENSP00000433094.1"/>
    <property type="gene ID" value="ENSG00000132681.17"/>
</dbReference>
<dbReference type="GeneID" id="480"/>
<dbReference type="KEGG" id="hsa:480"/>
<dbReference type="MANE-Select" id="ENST00000368081.9">
    <property type="protein sequence ID" value="ENSP00000357060.4"/>
    <property type="RefSeq nucleotide sequence ID" value="NM_144699.4"/>
    <property type="RefSeq protein sequence ID" value="NP_653300.2"/>
</dbReference>
<dbReference type="UCSC" id="uc001fve.5">
    <molecule id="Q13733-1"/>
    <property type="organism name" value="human"/>
</dbReference>
<dbReference type="AGR" id="HGNC:14073"/>
<dbReference type="CTD" id="480"/>
<dbReference type="DisGeNET" id="480"/>
<dbReference type="GeneCards" id="ATP1A4"/>
<dbReference type="HGNC" id="HGNC:14073">
    <property type="gene designation" value="ATP1A4"/>
</dbReference>
<dbReference type="HPA" id="ENSG00000132681">
    <property type="expression patterns" value="Tissue enhanced (placenta, testis, urinary bladder)"/>
</dbReference>
<dbReference type="MIM" id="607321">
    <property type="type" value="gene"/>
</dbReference>
<dbReference type="neXtProt" id="NX_Q13733"/>
<dbReference type="OpenTargets" id="ENSG00000132681"/>
<dbReference type="PharmGKB" id="PA65"/>
<dbReference type="VEuPathDB" id="HostDB:ENSG00000132681"/>
<dbReference type="eggNOG" id="KOG0203">
    <property type="taxonomic scope" value="Eukaryota"/>
</dbReference>
<dbReference type="GeneTree" id="ENSGT00940000162378"/>
<dbReference type="HOGENOM" id="CLU_002360_4_1_1"/>
<dbReference type="InParanoid" id="Q13733"/>
<dbReference type="OMA" id="NGQEYSM"/>
<dbReference type="OrthoDB" id="3352408at2759"/>
<dbReference type="PAN-GO" id="Q13733">
    <property type="GO annotations" value="9 GO annotations based on evolutionary models"/>
</dbReference>
<dbReference type="PhylomeDB" id="Q13733"/>
<dbReference type="TreeFam" id="TF312838"/>
<dbReference type="PathwayCommons" id="Q13733"/>
<dbReference type="Reactome" id="R-HSA-5578775">
    <property type="pathway name" value="Ion homeostasis"/>
</dbReference>
<dbReference type="Reactome" id="R-HSA-936837">
    <property type="pathway name" value="Ion transport by P-type ATPases"/>
</dbReference>
<dbReference type="Reactome" id="R-HSA-9679191">
    <property type="pathway name" value="Potential therapeutics for SARS"/>
</dbReference>
<dbReference type="SignaLink" id="Q13733"/>
<dbReference type="BioGRID-ORCS" id="480">
    <property type="hits" value="13 hits in 1149 CRISPR screens"/>
</dbReference>
<dbReference type="CD-CODE" id="FB4E32DD">
    <property type="entry name" value="Presynaptic clusters and postsynaptic densities"/>
</dbReference>
<dbReference type="ChiTaRS" id="ATP1A4">
    <property type="organism name" value="human"/>
</dbReference>
<dbReference type="GeneWiki" id="ATP1A4"/>
<dbReference type="GenomeRNAi" id="480"/>
<dbReference type="Pharos" id="Q13733">
    <property type="development level" value="Tclin"/>
</dbReference>
<dbReference type="PRO" id="PR:Q13733"/>
<dbReference type="Proteomes" id="UP000005640">
    <property type="component" value="Chromosome 1"/>
</dbReference>
<dbReference type="RNAct" id="Q13733">
    <property type="molecule type" value="protein"/>
</dbReference>
<dbReference type="Bgee" id="ENSG00000132681">
    <property type="expression patterns" value="Expressed in left testis and 88 other cell types or tissues"/>
</dbReference>
<dbReference type="ExpressionAtlas" id="Q13733">
    <property type="expression patterns" value="baseline and differential"/>
</dbReference>
<dbReference type="GO" id="GO:0042995">
    <property type="term" value="C:cell projection"/>
    <property type="evidence" value="ECO:0000318"/>
    <property type="project" value="GO_Central"/>
</dbReference>
<dbReference type="GO" id="GO:0045121">
    <property type="term" value="C:membrane raft"/>
    <property type="evidence" value="ECO:0000250"/>
    <property type="project" value="ARUK-UCL"/>
</dbReference>
<dbReference type="GO" id="GO:0097733">
    <property type="term" value="C:photoreceptor cell cilium"/>
    <property type="evidence" value="ECO:0000314"/>
    <property type="project" value="ARUK-UCL"/>
</dbReference>
<dbReference type="GO" id="GO:0005886">
    <property type="term" value="C:plasma membrane"/>
    <property type="evidence" value="ECO:0000318"/>
    <property type="project" value="GO_Central"/>
</dbReference>
<dbReference type="GO" id="GO:0120200">
    <property type="term" value="C:rod photoreceptor outer segment"/>
    <property type="evidence" value="ECO:0000314"/>
    <property type="project" value="ARUK-UCL"/>
</dbReference>
<dbReference type="GO" id="GO:0005890">
    <property type="term" value="C:sodium:potassium-exchanging ATPase complex"/>
    <property type="evidence" value="ECO:0000353"/>
    <property type="project" value="ARUK-UCL"/>
</dbReference>
<dbReference type="GO" id="GO:0097225">
    <property type="term" value="C:sperm midpiece"/>
    <property type="evidence" value="ECO:0000314"/>
    <property type="project" value="ARUK-UCL"/>
</dbReference>
<dbReference type="GO" id="GO:0005524">
    <property type="term" value="F:ATP binding"/>
    <property type="evidence" value="ECO:0007669"/>
    <property type="project" value="UniProtKB-KW"/>
</dbReference>
<dbReference type="GO" id="GO:0016887">
    <property type="term" value="F:ATP hydrolysis activity"/>
    <property type="evidence" value="ECO:0007669"/>
    <property type="project" value="InterPro"/>
</dbReference>
<dbReference type="GO" id="GO:0019829">
    <property type="term" value="F:ATPase-coupled monoatomic cation transmembrane transporter activity"/>
    <property type="evidence" value="ECO:0000316"/>
    <property type="project" value="ARUK-UCL"/>
</dbReference>
<dbReference type="GO" id="GO:0019900">
    <property type="term" value="F:kinase binding"/>
    <property type="evidence" value="ECO:0000250"/>
    <property type="project" value="ARUK-UCL"/>
</dbReference>
<dbReference type="GO" id="GO:0046872">
    <property type="term" value="F:metal ion binding"/>
    <property type="evidence" value="ECO:0007669"/>
    <property type="project" value="UniProtKB-KW"/>
</dbReference>
<dbReference type="GO" id="GO:0005391">
    <property type="term" value="F:P-type sodium:potassium-exchanging transporter activity"/>
    <property type="evidence" value="ECO:0000316"/>
    <property type="project" value="ARUK-UCL"/>
</dbReference>
<dbReference type="GO" id="GO:0007166">
    <property type="term" value="P:cell surface receptor signaling pathway"/>
    <property type="evidence" value="ECO:0000250"/>
    <property type="project" value="ARUK-UCL"/>
</dbReference>
<dbReference type="GO" id="GO:0051649">
    <property type="term" value="P:establishment of localization in cell"/>
    <property type="evidence" value="ECO:0007669"/>
    <property type="project" value="Ensembl"/>
</dbReference>
<dbReference type="GO" id="GO:0009566">
    <property type="term" value="P:fertilization"/>
    <property type="evidence" value="ECO:0007669"/>
    <property type="project" value="Ensembl"/>
</dbReference>
<dbReference type="GO" id="GO:0030317">
    <property type="term" value="P:flagellated sperm motility"/>
    <property type="evidence" value="ECO:0000314"/>
    <property type="project" value="UniProtKB"/>
</dbReference>
<dbReference type="GO" id="GO:0030007">
    <property type="term" value="P:intracellular potassium ion homeostasis"/>
    <property type="evidence" value="ECO:0000318"/>
    <property type="project" value="GO_Central"/>
</dbReference>
<dbReference type="GO" id="GO:0006883">
    <property type="term" value="P:intracellular sodium ion homeostasis"/>
    <property type="evidence" value="ECO:0000318"/>
    <property type="project" value="GO_Central"/>
</dbReference>
<dbReference type="GO" id="GO:0006811">
    <property type="term" value="P:monoatomic ion transport"/>
    <property type="evidence" value="ECO:0000303"/>
    <property type="project" value="ARUK-UCL"/>
</dbReference>
<dbReference type="GO" id="GO:1990573">
    <property type="term" value="P:potassium ion import across plasma membrane"/>
    <property type="evidence" value="ECO:0000318"/>
    <property type="project" value="GO_Central"/>
</dbReference>
<dbReference type="GO" id="GO:0071805">
    <property type="term" value="P:potassium ion transmembrane transport"/>
    <property type="evidence" value="ECO:0000316"/>
    <property type="project" value="ARUK-UCL"/>
</dbReference>
<dbReference type="GO" id="GO:0006813">
    <property type="term" value="P:potassium ion transport"/>
    <property type="evidence" value="ECO:0000304"/>
    <property type="project" value="UniProtKB"/>
</dbReference>
<dbReference type="GO" id="GO:1902600">
    <property type="term" value="P:proton transmembrane transport"/>
    <property type="evidence" value="ECO:0000318"/>
    <property type="project" value="GO_Central"/>
</dbReference>
<dbReference type="GO" id="GO:0030641">
    <property type="term" value="P:regulation of cellular pH"/>
    <property type="evidence" value="ECO:0000314"/>
    <property type="project" value="UniProtKB"/>
</dbReference>
<dbReference type="GO" id="GO:0042391">
    <property type="term" value="P:regulation of membrane potential"/>
    <property type="evidence" value="ECO:0007669"/>
    <property type="project" value="Ensembl"/>
</dbReference>
<dbReference type="GO" id="GO:0036376">
    <property type="term" value="P:sodium ion export across plasma membrane"/>
    <property type="evidence" value="ECO:0000318"/>
    <property type="project" value="GO_Central"/>
</dbReference>
<dbReference type="GO" id="GO:0035725">
    <property type="term" value="P:sodium ion transmembrane transport"/>
    <property type="evidence" value="ECO:0000316"/>
    <property type="project" value="ARUK-UCL"/>
</dbReference>
<dbReference type="GO" id="GO:0006814">
    <property type="term" value="P:sodium ion transport"/>
    <property type="evidence" value="ECO:0000304"/>
    <property type="project" value="UniProtKB"/>
</dbReference>
<dbReference type="GO" id="GO:0007283">
    <property type="term" value="P:spermatogenesis"/>
    <property type="evidence" value="ECO:0007669"/>
    <property type="project" value="Ensembl"/>
</dbReference>
<dbReference type="GO" id="GO:0150104">
    <property type="term" value="P:transport across blood-brain barrier"/>
    <property type="evidence" value="ECO:0000303"/>
    <property type="project" value="ARUK-UCL"/>
</dbReference>
<dbReference type="CDD" id="cd02608">
    <property type="entry name" value="P-type_ATPase_Na-K_like"/>
    <property type="match status" value="1"/>
</dbReference>
<dbReference type="FunFam" id="2.70.150.10:FF:000106">
    <property type="entry name" value="Sodium/potassium-transporting ATPase subunit alpha"/>
    <property type="match status" value="1"/>
</dbReference>
<dbReference type="FunFam" id="3.40.1110.10:FF:000001">
    <property type="entry name" value="Sodium/potassium-transporting ATPase subunit alpha"/>
    <property type="match status" value="1"/>
</dbReference>
<dbReference type="FunFam" id="3.40.50.1000:FF:000004">
    <property type="entry name" value="Sodium/potassium-transporting ATPase subunit alpha"/>
    <property type="match status" value="1"/>
</dbReference>
<dbReference type="FunFam" id="1.20.1110.10:FF:000095">
    <property type="entry name" value="Sodium/potassium-transporting ATPase subunit alpha-1"/>
    <property type="match status" value="2"/>
</dbReference>
<dbReference type="Gene3D" id="3.40.1110.10">
    <property type="entry name" value="Calcium-transporting ATPase, cytoplasmic domain N"/>
    <property type="match status" value="1"/>
</dbReference>
<dbReference type="Gene3D" id="2.70.150.10">
    <property type="entry name" value="Calcium-transporting ATPase, cytoplasmic transduction domain A"/>
    <property type="match status" value="1"/>
</dbReference>
<dbReference type="Gene3D" id="1.20.1110.10">
    <property type="entry name" value="Calcium-transporting ATPase, transmembrane domain"/>
    <property type="match status" value="1"/>
</dbReference>
<dbReference type="Gene3D" id="3.40.50.1000">
    <property type="entry name" value="HAD superfamily/HAD-like"/>
    <property type="match status" value="1"/>
</dbReference>
<dbReference type="InterPro" id="IPR006068">
    <property type="entry name" value="ATPase_P-typ_cation-transptr_C"/>
</dbReference>
<dbReference type="InterPro" id="IPR004014">
    <property type="entry name" value="ATPase_P-typ_cation-transptr_N"/>
</dbReference>
<dbReference type="InterPro" id="IPR023299">
    <property type="entry name" value="ATPase_P-typ_cyto_dom_N"/>
</dbReference>
<dbReference type="InterPro" id="IPR018303">
    <property type="entry name" value="ATPase_P-typ_P_site"/>
</dbReference>
<dbReference type="InterPro" id="IPR023298">
    <property type="entry name" value="ATPase_P-typ_TM_dom_sf"/>
</dbReference>
<dbReference type="InterPro" id="IPR008250">
    <property type="entry name" value="ATPase_P-typ_transduc_dom_A_sf"/>
</dbReference>
<dbReference type="InterPro" id="IPR050510">
    <property type="entry name" value="Cation_transp_ATPase_P-type"/>
</dbReference>
<dbReference type="InterPro" id="IPR036412">
    <property type="entry name" value="HAD-like_sf"/>
</dbReference>
<dbReference type="InterPro" id="IPR023214">
    <property type="entry name" value="HAD_sf"/>
</dbReference>
<dbReference type="InterPro" id="IPR005775">
    <property type="entry name" value="P-type_ATPase_IIC"/>
</dbReference>
<dbReference type="InterPro" id="IPR001757">
    <property type="entry name" value="P_typ_ATPase"/>
</dbReference>
<dbReference type="InterPro" id="IPR044492">
    <property type="entry name" value="P_typ_ATPase_HD_dom"/>
</dbReference>
<dbReference type="NCBIfam" id="TIGR01106">
    <property type="entry name" value="ATPase-IIC_X-K"/>
    <property type="match status" value="1"/>
</dbReference>
<dbReference type="NCBIfam" id="TIGR01494">
    <property type="entry name" value="ATPase_P-type"/>
    <property type="match status" value="2"/>
</dbReference>
<dbReference type="PANTHER" id="PTHR43294">
    <property type="entry name" value="SODIUM/POTASSIUM-TRANSPORTING ATPASE SUBUNIT ALPHA"/>
    <property type="match status" value="1"/>
</dbReference>
<dbReference type="PANTHER" id="PTHR43294:SF3">
    <property type="entry name" value="SODIUM_POTASSIUM-TRANSPORTING ATPASE SUBUNIT ALPHA-4"/>
    <property type="match status" value="1"/>
</dbReference>
<dbReference type="Pfam" id="PF13246">
    <property type="entry name" value="Cation_ATPase"/>
    <property type="match status" value="1"/>
</dbReference>
<dbReference type="Pfam" id="PF00689">
    <property type="entry name" value="Cation_ATPase_C"/>
    <property type="match status" value="1"/>
</dbReference>
<dbReference type="Pfam" id="PF00690">
    <property type="entry name" value="Cation_ATPase_N"/>
    <property type="match status" value="1"/>
</dbReference>
<dbReference type="Pfam" id="PF00122">
    <property type="entry name" value="E1-E2_ATPase"/>
    <property type="match status" value="1"/>
</dbReference>
<dbReference type="Pfam" id="PF00702">
    <property type="entry name" value="Hydrolase"/>
    <property type="match status" value="1"/>
</dbReference>
<dbReference type="PRINTS" id="PR00119">
    <property type="entry name" value="CATATPASE"/>
</dbReference>
<dbReference type="PRINTS" id="PR00121">
    <property type="entry name" value="NAKATPASE"/>
</dbReference>
<dbReference type="SFLD" id="SFLDG00002">
    <property type="entry name" value="C1.7:_P-type_atpase_like"/>
    <property type="match status" value="1"/>
</dbReference>
<dbReference type="SFLD" id="SFLDF00027">
    <property type="entry name" value="p-type_atpase"/>
    <property type="match status" value="1"/>
</dbReference>
<dbReference type="SMART" id="SM00831">
    <property type="entry name" value="Cation_ATPase_N"/>
    <property type="match status" value="1"/>
</dbReference>
<dbReference type="SUPFAM" id="SSF81653">
    <property type="entry name" value="Calcium ATPase, transduction domain A"/>
    <property type="match status" value="1"/>
</dbReference>
<dbReference type="SUPFAM" id="SSF81665">
    <property type="entry name" value="Calcium ATPase, transmembrane domain M"/>
    <property type="match status" value="1"/>
</dbReference>
<dbReference type="SUPFAM" id="SSF56784">
    <property type="entry name" value="HAD-like"/>
    <property type="match status" value="1"/>
</dbReference>
<dbReference type="SUPFAM" id="SSF81660">
    <property type="entry name" value="Metal cation-transporting ATPase, ATP-binding domain N"/>
    <property type="match status" value="1"/>
</dbReference>
<dbReference type="PROSITE" id="PS00154">
    <property type="entry name" value="ATPASE_E1_E2"/>
    <property type="match status" value="1"/>
</dbReference>
<comment type="function">
    <text>This is the catalytic component of the active enzyme, which catalyzes the hydrolysis of ATP coupled with the exchange of sodium and potassium ions across the plasma membrane. This action creates the electrochemical gradient of sodium and potassium ions, providing the energy for active transport of various nutrients. Plays a role in sperm motility.</text>
</comment>
<comment type="catalytic activity">
    <reaction evidence="2">
        <text>K(+)(out) + Na(+)(in) + ATP + H2O = K(+)(in) + Na(+)(out) + ADP + phosphate + H(+)</text>
        <dbReference type="Rhea" id="RHEA:18353"/>
        <dbReference type="ChEBI" id="CHEBI:15377"/>
        <dbReference type="ChEBI" id="CHEBI:15378"/>
        <dbReference type="ChEBI" id="CHEBI:29101"/>
        <dbReference type="ChEBI" id="CHEBI:29103"/>
        <dbReference type="ChEBI" id="CHEBI:30616"/>
        <dbReference type="ChEBI" id="CHEBI:43474"/>
        <dbReference type="ChEBI" id="CHEBI:456216"/>
        <dbReference type="EC" id="7.2.2.13"/>
    </reaction>
    <physiologicalReaction direction="left-to-right" evidence="2">
        <dbReference type="Rhea" id="RHEA:18354"/>
    </physiologicalReaction>
</comment>
<comment type="activity regulation">
    <text evidence="5">Specifically inhibited by an endogenous cardiac glycoside, ouabain.</text>
</comment>
<comment type="subunit">
    <text evidence="8">The sodium/potassium-transporting ATPase is composed of a catalytic alpha subunit, an auxiliary non-catalytic beta subunit and an additional regulatory subunit.</text>
</comment>
<comment type="interaction">
    <interactant intactId="EBI-12356439">
        <id>Q13733-2</id>
    </interactant>
    <interactant intactId="EBI-1188472">
        <id>P78358</id>
        <label>CTAG1B</label>
    </interactant>
    <organismsDiffer>false</organismsDiffer>
    <experiments>3</experiments>
</comment>
<comment type="interaction">
    <interactant intactId="EBI-12356439">
        <id>Q13733-2</id>
    </interactant>
    <interactant intactId="EBI-9091816">
        <id>Q9NPQ8-4</id>
        <label>RIC8A</label>
    </interactant>
    <organismsDiffer>false</organismsDiffer>
    <experiments>3</experiments>
</comment>
<comment type="subcellular location">
    <subcellularLocation>
        <location evidence="5">Cell membrane</location>
        <topology evidence="5">Multi-pass membrane protein</topology>
    </subcellularLocation>
    <text>In mature sperm, located in the principle piece of the sperm flagellum.</text>
</comment>
<comment type="alternative products">
    <event type="alternative splicing"/>
    <isoform>
        <id>Q13733-1</id>
        <name>1</name>
        <sequence type="displayed"/>
    </isoform>
    <isoform>
        <id>Q13733-2</id>
        <name>2</name>
        <sequence type="described" ref="VSP_007364"/>
    </isoform>
</comment>
<comment type="tissue specificity">
    <text>Specifically expressed in testis. Found in very low levels in skeletal muscle. Expressed in mature sperm (at protein level).</text>
</comment>
<comment type="similarity">
    <text evidence="8">Belongs to the cation transport ATPase (P-type) (TC 3.A.3) family. Type IIC subfamily.</text>
</comment>
<comment type="sequence caution" evidence="8">
    <conflict type="erroneous initiation">
        <sequence resource="EMBL-CDS" id="AAQ07964"/>
    </conflict>
    <text>Truncated N-terminus.</text>
</comment>
<comment type="sequence caution" evidence="8">
    <conflict type="erroneous initiation">
        <sequence resource="EMBL-CDS" id="BAC05228"/>
    </conflict>
    <text>Truncated N-terminus.</text>
</comment>
<evidence type="ECO:0000250" key="1"/>
<evidence type="ECO:0000250" key="2">
    <source>
        <dbReference type="UniProtKB" id="Q64541"/>
    </source>
</evidence>
<evidence type="ECO:0000255" key="3"/>
<evidence type="ECO:0000256" key="4">
    <source>
        <dbReference type="SAM" id="MobiDB-lite"/>
    </source>
</evidence>
<evidence type="ECO:0000269" key="5">
    <source>
    </source>
</evidence>
<evidence type="ECO:0000269" key="6">
    <source>
    </source>
</evidence>
<evidence type="ECO:0000303" key="7">
    <source>
    </source>
</evidence>
<evidence type="ECO:0000305" key="8"/>
<evidence type="ECO:0000312" key="9">
    <source>
        <dbReference type="HGNC" id="HGNC:14073"/>
    </source>
</evidence>
<evidence type="ECO:0007829" key="10">
    <source>
        <dbReference type="PDB" id="8ZYJ"/>
    </source>
</evidence>
<name>AT1A4_HUMAN</name>
<feature type="chain" id="PRO_0000046303" description="Sodium/potassium-transporting ATPase subunit alpha-4">
    <location>
        <begin position="1"/>
        <end position="1029"/>
    </location>
</feature>
<feature type="topological domain" description="Cytoplasmic" evidence="3">
    <location>
        <begin position="1"/>
        <end position="95"/>
    </location>
</feature>
<feature type="transmembrane region" description="Helical" evidence="3">
    <location>
        <begin position="96"/>
        <end position="116"/>
    </location>
</feature>
<feature type="topological domain" description="Extracellular" evidence="3">
    <location>
        <begin position="117"/>
        <end position="139"/>
    </location>
</feature>
<feature type="transmembrane region" description="Helical" evidence="3">
    <location>
        <begin position="140"/>
        <end position="160"/>
    </location>
</feature>
<feature type="topological domain" description="Cytoplasmic" evidence="3">
    <location>
        <begin position="161"/>
        <end position="296"/>
    </location>
</feature>
<feature type="transmembrane region" description="Helical" evidence="3">
    <location>
        <begin position="297"/>
        <end position="316"/>
    </location>
</feature>
<feature type="topological domain" description="Extracellular" evidence="3">
    <location>
        <begin position="317"/>
        <end position="328"/>
    </location>
</feature>
<feature type="transmembrane region" description="Helical" evidence="3">
    <location>
        <begin position="329"/>
        <end position="346"/>
    </location>
</feature>
<feature type="topological domain" description="Cytoplasmic" evidence="3">
    <location>
        <begin position="347"/>
        <end position="778"/>
    </location>
</feature>
<feature type="transmembrane region" description="Helical" evidence="3">
    <location>
        <begin position="779"/>
        <end position="798"/>
    </location>
</feature>
<feature type="topological domain" description="Extracellular" evidence="3">
    <location>
        <begin position="799"/>
        <end position="808"/>
    </location>
</feature>
<feature type="transmembrane region" description="Helical" evidence="3">
    <location>
        <begin position="809"/>
        <end position="829"/>
    </location>
</feature>
<feature type="topological domain" description="Cytoplasmic" evidence="3">
    <location>
        <begin position="830"/>
        <end position="849"/>
    </location>
</feature>
<feature type="transmembrane region" description="Helical" evidence="3">
    <location>
        <begin position="850"/>
        <end position="872"/>
    </location>
</feature>
<feature type="topological domain" description="Extracellular" evidence="3">
    <location>
        <begin position="873"/>
        <end position="924"/>
    </location>
</feature>
<feature type="transmembrane region" description="Helical" evidence="3">
    <location>
        <begin position="925"/>
        <end position="944"/>
    </location>
</feature>
<feature type="topological domain" description="Cytoplasmic" evidence="3">
    <location>
        <begin position="945"/>
        <end position="957"/>
    </location>
</feature>
<feature type="transmembrane region" description="Helical" evidence="3">
    <location>
        <begin position="958"/>
        <end position="976"/>
    </location>
</feature>
<feature type="topological domain" description="Extracellular" evidence="3">
    <location>
        <begin position="977"/>
        <end position="991"/>
    </location>
</feature>
<feature type="transmembrane region" description="Helical" evidence="3">
    <location>
        <begin position="992"/>
        <end position="1012"/>
    </location>
</feature>
<feature type="topological domain" description="Cytoplasmic" evidence="3">
    <location>
        <begin position="1013"/>
        <end position="1029"/>
    </location>
</feature>
<feature type="region of interest" description="Disordered" evidence="4">
    <location>
        <begin position="1"/>
        <end position="37"/>
    </location>
</feature>
<feature type="region of interest" description="Interaction with phosphoinositide-3 kinase" evidence="1">
    <location>
        <begin position="90"/>
        <end position="92"/>
    </location>
</feature>
<feature type="region of interest" description="Disordered" evidence="4">
    <location>
        <begin position="223"/>
        <end position="242"/>
    </location>
</feature>
<feature type="compositionally biased region" description="Basic residues" evidence="4">
    <location>
        <begin position="18"/>
        <end position="36"/>
    </location>
</feature>
<feature type="compositionally biased region" description="Polar residues" evidence="4">
    <location>
        <begin position="223"/>
        <end position="237"/>
    </location>
</feature>
<feature type="active site" description="4-aspartylphosphate intermediate" evidence="1">
    <location>
        <position position="384"/>
    </location>
</feature>
<feature type="binding site" evidence="1">
    <location>
        <position position="723"/>
    </location>
    <ligand>
        <name>Mg(2+)</name>
        <dbReference type="ChEBI" id="CHEBI:18420"/>
    </ligand>
</feature>
<feature type="binding site" evidence="1">
    <location>
        <position position="727"/>
    </location>
    <ligand>
        <name>Mg(2+)</name>
        <dbReference type="ChEBI" id="CHEBI:18420"/>
    </ligand>
</feature>
<feature type="modified residue" description="Phosphoserine; by PKA" evidence="1">
    <location>
        <position position="949"/>
    </location>
</feature>
<feature type="splice variant" id="VSP_007364" description="In isoform 2." evidence="7">
    <location>
        <begin position="1"/>
        <end position="864"/>
    </location>
</feature>
<feature type="sequence variant" id="VAR_048375" description="In dbSNP:rs6427504." evidence="6">
    <original>G</original>
    <variation>D</variation>
    <location>
        <position position="83"/>
    </location>
</feature>
<feature type="sequence variant" id="VAR_048376" description="In dbSNP:rs17368402.">
    <original>E</original>
    <variation>K</variation>
    <location>
        <position position="297"/>
    </location>
</feature>
<feature type="sequence variant" id="VAR_048377" description="In dbSNP:rs16831482.">
    <original>M</original>
    <variation>R</variation>
    <location>
        <position position="541"/>
    </location>
</feature>
<feature type="sequence variant" id="VAR_048378" description="In dbSNP:rs7528360.">
    <original>M</original>
    <variation>I</variation>
    <location>
        <position position="586"/>
    </location>
</feature>
<feature type="sequence conflict" description="In Ref. 5; AAA60941." evidence="8" ref="5">
    <original>S</original>
    <variation>W</variation>
    <location>
        <position position="155"/>
    </location>
</feature>
<feature type="sequence conflict" description="In Ref. 6; BAC05228." evidence="8" ref="6">
    <original>ITWWLCAIPYSILIFVYDEIRKLLIRQ</original>
    <variation>WSFALTAQAGVKWRILGLLQPLPPRFK</variation>
    <location>
        <begin position="991"/>
        <end position="1017"/>
    </location>
</feature>
<feature type="strand" evidence="10">
    <location>
        <begin position="49"/>
        <end position="51"/>
    </location>
</feature>
<feature type="helix" evidence="10">
    <location>
        <begin position="56"/>
        <end position="63"/>
    </location>
</feature>
<feature type="turn" evidence="10">
    <location>
        <begin position="67"/>
        <end position="69"/>
    </location>
</feature>
<feature type="helix" evidence="10">
    <location>
        <begin position="73"/>
        <end position="83"/>
    </location>
</feature>
<feature type="helix" evidence="10">
    <location>
        <begin position="96"/>
        <end position="104"/>
    </location>
</feature>
<feature type="helix" evidence="10">
    <location>
        <begin position="107"/>
        <end position="129"/>
    </location>
</feature>
<feature type="strand" evidence="10">
    <location>
        <begin position="130"/>
        <end position="132"/>
    </location>
</feature>
<feature type="helix" evidence="10">
    <location>
        <begin position="136"/>
        <end position="169"/>
    </location>
</feature>
<feature type="strand" evidence="10">
    <location>
        <begin position="179"/>
        <end position="181"/>
    </location>
</feature>
<feature type="strand" evidence="10">
    <location>
        <begin position="184"/>
        <end position="186"/>
    </location>
</feature>
<feature type="helix" evidence="10">
    <location>
        <begin position="190"/>
        <end position="192"/>
    </location>
</feature>
<feature type="strand" evidence="10">
    <location>
        <begin position="198"/>
        <end position="202"/>
    </location>
</feature>
<feature type="strand" evidence="10">
    <location>
        <begin position="209"/>
        <end position="222"/>
    </location>
</feature>
<feature type="helix" evidence="10">
    <location>
        <begin position="224"/>
        <end position="227"/>
    </location>
</feature>
<feature type="strand" evidence="10">
    <location>
        <begin position="233"/>
        <end position="235"/>
    </location>
</feature>
<feature type="turn" evidence="10">
    <location>
        <begin position="244"/>
        <end position="246"/>
    </location>
</feature>
<feature type="strand" evidence="10">
    <location>
        <begin position="256"/>
        <end position="268"/>
    </location>
</feature>
<feature type="helix" evidence="10">
    <location>
        <begin position="270"/>
        <end position="272"/>
    </location>
</feature>
<feature type="helix" evidence="10">
    <location>
        <begin position="274"/>
        <end position="283"/>
    </location>
</feature>
<feature type="helix" evidence="10">
    <location>
        <begin position="291"/>
        <end position="320"/>
    </location>
</feature>
<feature type="helix" evidence="10">
    <location>
        <begin position="325"/>
        <end position="338"/>
    </location>
</feature>
<feature type="helix" evidence="10">
    <location>
        <begin position="342"/>
        <end position="360"/>
    </location>
</feature>
<feature type="turn" evidence="10">
    <location>
        <begin position="361"/>
        <end position="363"/>
    </location>
</feature>
<feature type="strand" evidence="10">
    <location>
        <begin position="364"/>
        <end position="368"/>
    </location>
</feature>
<feature type="helix" evidence="10">
    <location>
        <begin position="371"/>
        <end position="377"/>
    </location>
</feature>
<feature type="strand" evidence="10">
    <location>
        <begin position="380"/>
        <end position="383"/>
    </location>
</feature>
<feature type="helix" evidence="10">
    <location>
        <begin position="385"/>
        <end position="389"/>
    </location>
</feature>
<feature type="strand" evidence="10">
    <location>
        <begin position="395"/>
        <end position="401"/>
    </location>
</feature>
<feature type="strand" evidence="10">
    <location>
        <begin position="404"/>
        <end position="407"/>
    </location>
</feature>
<feature type="helix" evidence="10">
    <location>
        <begin position="424"/>
        <end position="435"/>
    </location>
</feature>
<feature type="strand" evidence="10">
    <location>
        <begin position="446"/>
        <end position="448"/>
    </location>
</feature>
<feature type="helix" evidence="10">
    <location>
        <begin position="450"/>
        <end position="452"/>
    </location>
</feature>
<feature type="strand" evidence="10">
    <location>
        <begin position="455"/>
        <end position="457"/>
    </location>
</feature>
<feature type="helix" evidence="10">
    <location>
        <begin position="459"/>
        <end position="471"/>
    </location>
</feature>
<feature type="helix" evidence="10">
    <location>
        <begin position="475"/>
        <end position="481"/>
    </location>
</feature>
<feature type="strand" evidence="10">
    <location>
        <begin position="484"/>
        <end position="486"/>
    </location>
</feature>
<feature type="turn" evidence="10">
    <location>
        <begin position="492"/>
        <end position="495"/>
    </location>
</feature>
<feature type="strand" evidence="10">
    <location>
        <begin position="496"/>
        <end position="502"/>
    </location>
</feature>
<feature type="strand" evidence="10">
    <location>
        <begin position="508"/>
        <end position="516"/>
    </location>
</feature>
<feature type="helix" evidence="10">
    <location>
        <begin position="518"/>
        <end position="521"/>
    </location>
</feature>
<feature type="turn" evidence="10">
    <location>
        <begin position="522"/>
        <end position="524"/>
    </location>
</feature>
<feature type="strand" evidence="10">
    <location>
        <begin position="527"/>
        <end position="532"/>
    </location>
</feature>
<feature type="helix" evidence="10">
    <location>
        <begin position="540"/>
        <end position="542"/>
    </location>
</feature>
<feature type="helix" evidence="10">
    <location>
        <begin position="544"/>
        <end position="552"/>
    </location>
</feature>
<feature type="turn" evidence="10">
    <location>
        <begin position="553"/>
        <end position="556"/>
    </location>
</feature>
<feature type="strand" evidence="10">
    <location>
        <begin position="558"/>
        <end position="564"/>
    </location>
</feature>
<feature type="helix" evidence="10">
    <location>
        <begin position="569"/>
        <end position="571"/>
    </location>
</feature>
<feature type="turn" evidence="10">
    <location>
        <begin position="572"/>
        <end position="574"/>
    </location>
</feature>
<feature type="turn" evidence="10">
    <location>
        <begin position="579"/>
        <end position="582"/>
    </location>
</feature>
<feature type="strand" evidence="10">
    <location>
        <begin position="590"/>
        <end position="598"/>
    </location>
</feature>
<feature type="helix" evidence="10">
    <location>
        <begin position="605"/>
        <end position="614"/>
    </location>
</feature>
<feature type="strand" evidence="10">
    <location>
        <begin position="618"/>
        <end position="622"/>
    </location>
</feature>
<feature type="helix" evidence="10">
    <location>
        <begin position="627"/>
        <end position="636"/>
    </location>
</feature>
<feature type="helix" evidence="10">
    <location>
        <begin position="647"/>
        <end position="654"/>
    </location>
</feature>
<feature type="turn" evidence="10">
    <location>
        <begin position="658"/>
        <end position="660"/>
    </location>
</feature>
<feature type="strand" evidence="10">
    <location>
        <begin position="668"/>
        <end position="672"/>
    </location>
</feature>
<feature type="helix" evidence="10">
    <location>
        <begin position="673"/>
        <end position="676"/>
    </location>
</feature>
<feature type="helix" evidence="10">
    <location>
        <begin position="681"/>
        <end position="690"/>
    </location>
</feature>
<feature type="strand" evidence="10">
    <location>
        <begin position="692"/>
        <end position="698"/>
    </location>
</feature>
<feature type="helix" evidence="10">
    <location>
        <begin position="701"/>
        <end position="713"/>
    </location>
</feature>
<feature type="strand" evidence="10">
    <location>
        <begin position="718"/>
        <end position="722"/>
    </location>
</feature>
<feature type="helix" evidence="10">
    <location>
        <begin position="725"/>
        <end position="727"/>
    </location>
</feature>
<feature type="helix" evidence="10">
    <location>
        <begin position="728"/>
        <end position="733"/>
    </location>
</feature>
<feature type="strand" evidence="10">
    <location>
        <begin position="734"/>
        <end position="740"/>
    </location>
</feature>
<feature type="turn" evidence="10">
    <location>
        <begin position="741"/>
        <end position="743"/>
    </location>
</feature>
<feature type="helix" evidence="10">
    <location>
        <begin position="746"/>
        <end position="751"/>
    </location>
</feature>
<feature type="strand" evidence="10">
    <location>
        <begin position="753"/>
        <end position="756"/>
    </location>
</feature>
<feature type="helix" evidence="10">
    <location>
        <begin position="762"/>
        <end position="787"/>
    </location>
</feature>
<feature type="helix" evidence="10">
    <location>
        <begin position="790"/>
        <end position="802"/>
    </location>
</feature>
<feature type="helix" evidence="10">
    <location>
        <begin position="810"/>
        <end position="817"/>
    </location>
</feature>
<feature type="turn" evidence="10">
    <location>
        <begin position="818"/>
        <end position="821"/>
    </location>
</feature>
<feature type="helix" evidence="10">
    <location>
        <begin position="822"/>
        <end position="827"/>
    </location>
</feature>
<feature type="helix" evidence="10">
    <location>
        <begin position="828"/>
        <end position="830"/>
    </location>
</feature>
<feature type="helix" evidence="10">
    <location>
        <begin position="837"/>
        <end position="839"/>
    </location>
</feature>
<feature type="turn" evidence="10">
    <location>
        <begin position="845"/>
        <end position="847"/>
    </location>
</feature>
<feature type="helix" evidence="10">
    <location>
        <begin position="853"/>
        <end position="859"/>
    </location>
</feature>
<feature type="turn" evidence="10">
    <location>
        <begin position="860"/>
        <end position="862"/>
    </location>
</feature>
<feature type="helix" evidence="10">
    <location>
        <begin position="863"/>
        <end position="881"/>
    </location>
</feature>
<feature type="helix" evidence="10">
    <location>
        <begin position="886"/>
        <end position="889"/>
    </location>
</feature>
<feature type="helix" evidence="10">
    <location>
        <begin position="893"/>
        <end position="896"/>
    </location>
</feature>
<feature type="helix" evidence="10">
    <location>
        <begin position="914"/>
        <end position="942"/>
    </location>
</feature>
<feature type="strand" evidence="10">
    <location>
        <begin position="946"/>
        <end position="948"/>
    </location>
</feature>
<feature type="helix" evidence="10">
    <location>
        <begin position="950"/>
        <end position="953"/>
    </location>
</feature>
<feature type="helix" evidence="10">
    <location>
        <begin position="958"/>
        <end position="976"/>
    </location>
</feature>
<feature type="helix" evidence="10">
    <location>
        <begin position="980"/>
        <end position="983"/>
    </location>
</feature>
<feature type="helix" evidence="10">
    <location>
        <begin position="991"/>
        <end position="994"/>
    </location>
</feature>
<feature type="helix" evidence="10">
    <location>
        <begin position="995"/>
        <end position="997"/>
    </location>
</feature>
<feature type="helix" evidence="10">
    <location>
        <begin position="998"/>
        <end position="1017"/>
    </location>
</feature>
<feature type="helix" evidence="10">
    <location>
        <begin position="1022"/>
        <end position="1027"/>
    </location>
</feature>
<protein>
    <recommendedName>
        <fullName evidence="8">Sodium/potassium-transporting ATPase subunit alpha-4</fullName>
        <shortName>Na(+)/K(+) ATPase alpha-4 subunit</shortName>
        <ecNumber evidence="2">7.2.2.13</ecNumber>
    </recommendedName>
    <alternativeName>
        <fullName>Sodium pump subunit alpha-4</fullName>
    </alternativeName>
</protein>
<accession>Q13733</accession>
<accession>Q504T2</accession>
<accession>Q7Z4I9</accession>
<accession>Q8TBN8</accession>
<accession>Q8WXA7</accession>
<accession>Q8WXH7</accession>
<accession>Q8WY13</accession>
<organism>
    <name type="scientific">Homo sapiens</name>
    <name type="common">Human</name>
    <dbReference type="NCBI Taxonomy" id="9606"/>
    <lineage>
        <taxon>Eukaryota</taxon>
        <taxon>Metazoa</taxon>
        <taxon>Chordata</taxon>
        <taxon>Craniata</taxon>
        <taxon>Vertebrata</taxon>
        <taxon>Euteleostomi</taxon>
        <taxon>Mammalia</taxon>
        <taxon>Eutheria</taxon>
        <taxon>Euarchontoglires</taxon>
        <taxon>Primates</taxon>
        <taxon>Haplorrhini</taxon>
        <taxon>Catarrhini</taxon>
        <taxon>Hominidae</taxon>
        <taxon>Homo</taxon>
    </lineage>
</organism>
<keyword id="KW-0002">3D-structure</keyword>
<keyword id="KW-0025">Alternative splicing</keyword>
<keyword id="KW-0067">ATP-binding</keyword>
<keyword id="KW-1003">Cell membrane</keyword>
<keyword id="KW-0406">Ion transport</keyword>
<keyword id="KW-0460">Magnesium</keyword>
<keyword id="KW-0472">Membrane</keyword>
<keyword id="KW-0479">Metal-binding</keyword>
<keyword id="KW-0547">Nucleotide-binding</keyword>
<keyword id="KW-0597">Phosphoprotein</keyword>
<keyword id="KW-0630">Potassium</keyword>
<keyword id="KW-0633">Potassium transport</keyword>
<keyword id="KW-1267">Proteomics identification</keyword>
<keyword id="KW-1185">Reference proteome</keyword>
<keyword id="KW-0915">Sodium</keyword>
<keyword id="KW-0739">Sodium transport</keyword>
<keyword id="KW-0740">Sodium/potassium transport</keyword>
<keyword id="KW-1278">Translocase</keyword>
<keyword id="KW-0812">Transmembrane</keyword>
<keyword id="KW-1133">Transmembrane helix</keyword>
<keyword id="KW-0813">Transport</keyword>
<proteinExistence type="evidence at protein level"/>
<sequence>MGLWGKKGTVAPHDQSPRRRPKKGLIKKKMVKREKQKRNMEELKKEVVMDDHKLTLEELSTKYSVDLTKGHSHQRAKEILTRGGPNTVTPPPTTPEWVKFCKQLFGGFSLLLWTGAILCFVAYSIQIYFNEEPTKDNLYLSIVLSVVVIVTGCFSYYQEAKSSKIMESFKNMVPQQALVIRGGEKMQINVQEVVLGDLVEIKGGDRVPADLRLISAQGCKVDNSSLTGESEPQSRSPDFTHENPLETRNICFFSTNCVEGTARGIVIATGDSTVMGRIASLTSGLAVGQTPIAAEIEHFIHLITVVAVFLGVTFFALSLLLGYGWLEAIIFLIGIIVANVPEGLLATVTVCLTLTAKRMARKNCLVKNLEAVETLGSTSTICSDKTGTLTQNRMTVAHMWFDMTVYEADTTEEQTGKTFTKSSDTWFMLARIAGLCNRADFKANQEILPIAKRATTGDASESALLKFIEQSYSSVAEMREKNPKVAEIPFNSTNKYQMSIHLREDSSQTHVLMMKGAPERILEFCSTFLLNGQEYSMNDEMKEAFQNAYLELGGLGERVLGFCFLNLPSSFSKGFPFNTDEINFPMDNLCFVGLISMIDPPRAAVPDAVSKCRSAGIKVIMVTGDHPITAKAIAKGVGIISEGTETAEEVAARLKIPISKVDASAAKAIVVHGAELKDIQSKQLDQILQNHPEIVFARTSPQQKLIIVEGCQRLGAVVAVTGDGVNDSPALKKADIGIAMGISGSDVSKQAADMILLDDNFASIVTGVEEGRLIFDNLKKSIMYTLTSNIPEITPFLMFIILGIPLPLGTITILCIDLGTDMVPAISLAYESAESDIMKRLPRNPKTDNLVNHRLIGMAYGQIGMIQALAGFFTYFVILAENGFRPVDLLGIRLHWEDKYLNDLEDSYGQQWTYEQRKVVEFTCQTAFFVTIVVVQWADLIISKTRRNSLFQQGMRNKVLIFGILEETLLAAFLSYTPGMDVALRMYPLKITWWLCAIPYSILIFVYDEIRKLLIRQHPDGWVERETYY</sequence>